<name>ERFB_ASPFU</name>
<accession>Q4WWN2</accession>
<gene>
    <name type="primary">erf2</name>
    <name type="ORF">AFUA_3G06470</name>
</gene>
<evidence type="ECO:0000250" key="1">
    <source>
        <dbReference type="UniProtKB" id="Q06551"/>
    </source>
</evidence>
<evidence type="ECO:0000250" key="2">
    <source>
        <dbReference type="UniProtKB" id="Q8VDZ4"/>
    </source>
</evidence>
<evidence type="ECO:0000250" key="3">
    <source>
        <dbReference type="UniProtKB" id="Q9UIJ5"/>
    </source>
</evidence>
<evidence type="ECO:0000255" key="4"/>
<evidence type="ECO:0000255" key="5">
    <source>
        <dbReference type="PROSITE-ProRule" id="PRU00067"/>
    </source>
</evidence>
<evidence type="ECO:0000256" key="6">
    <source>
        <dbReference type="SAM" id="MobiDB-lite"/>
    </source>
</evidence>
<evidence type="ECO:0000305" key="7"/>
<comment type="function">
    <text evidence="1">Palmitoyltransferase specific for Ras proteins.</text>
</comment>
<comment type="catalytic activity">
    <reaction evidence="2">
        <text>L-cysteinyl-[protein] + hexadecanoyl-CoA = S-hexadecanoyl-L-cysteinyl-[protein] + CoA</text>
        <dbReference type="Rhea" id="RHEA:36683"/>
        <dbReference type="Rhea" id="RHEA-COMP:10131"/>
        <dbReference type="Rhea" id="RHEA-COMP:11032"/>
        <dbReference type="ChEBI" id="CHEBI:29950"/>
        <dbReference type="ChEBI" id="CHEBI:57287"/>
        <dbReference type="ChEBI" id="CHEBI:57379"/>
        <dbReference type="ChEBI" id="CHEBI:74151"/>
        <dbReference type="EC" id="2.3.1.225"/>
    </reaction>
</comment>
<comment type="subcellular location">
    <subcellularLocation>
        <location evidence="1">Endoplasmic reticulum membrane</location>
        <topology evidence="1">Multi-pass membrane protein</topology>
    </subcellularLocation>
</comment>
<comment type="domain">
    <text evidence="1">The DHHC domain is required for palmitoyltransferase activity.</text>
</comment>
<comment type="PTM">
    <text evidence="3">Autopalmitoylated.</text>
</comment>
<comment type="similarity">
    <text evidence="7">Belongs to the DHHC palmitoyltransferase family. ERF2/ZDHHC9 subfamily.</text>
</comment>
<sequence length="607" mass="67422">MSSAPETSDADHVSTAQPALGIPRPPSVGGISSRMTDVASEDGEQSQANTGISSRPPQSQRSLSRRGPPPARSSITAHSQMTSRPGSSASRLSRSHIPSLTAQGFFRPMSSQRLQAHRGRPVTKETATPSEDWNDQLDQNRQSIISNGTFPQSSAPQEEAPPSRGTEFTDPIIPDRNTSNASPFGNTTSRSVGESAKLLHDRDRVYKITPQHLDLGANHNIEKSDPSQRSPLSFLSLQNGNTAPEPRDNRAHERLSSADSSPGSIQKQHHAPTSANLGKNYEYFTGNTLFFGGGRFQNSRDKPINIATGIFVVLPSALFFAYSAPWLWHHISPAVPILFAYLFYICFSSFIHASVVDPGIIPRNLHPMPPPEPSGDPLLIGPPTNDWVMVKLATSDVAAMDVPVKYCKTCNIWRPPRCYHCRVCDNCVETLDHHCVWLNNCVGRRNYRYFFAFVSSATLLALFLLGASLAHVLVYRAREGVSFGSAIDKWRVPWAMVIYGALAAPYPASLWAYHLFLIGRGETTREYLNSHKFAKADRHRPFTQGNIFRNWISVLARPRPPTYLQFKRPYQEGDQRLSAMKRKDRPRDVEAQADIEMQHVPPTPRQG</sequence>
<keyword id="KW-0012">Acyltransferase</keyword>
<keyword id="KW-0256">Endoplasmic reticulum</keyword>
<keyword id="KW-0449">Lipoprotein</keyword>
<keyword id="KW-0472">Membrane</keyword>
<keyword id="KW-0564">Palmitate</keyword>
<keyword id="KW-1185">Reference proteome</keyword>
<keyword id="KW-0808">Transferase</keyword>
<keyword id="KW-0812">Transmembrane</keyword>
<keyword id="KW-1133">Transmembrane helix</keyword>
<dbReference type="EC" id="2.3.1.225" evidence="2"/>
<dbReference type="EMBL" id="AAHF01000002">
    <property type="protein sequence ID" value="EAL92921.1"/>
    <property type="molecule type" value="Genomic_DNA"/>
</dbReference>
<dbReference type="RefSeq" id="XP_754959.1">
    <property type="nucleotide sequence ID" value="XM_749866.1"/>
</dbReference>
<dbReference type="SMR" id="Q4WWN2"/>
<dbReference type="STRING" id="330879.Q4WWN2"/>
<dbReference type="EnsemblFungi" id="EAL92921">
    <property type="protein sequence ID" value="EAL92921"/>
    <property type="gene ID" value="AFUA_3G06470"/>
</dbReference>
<dbReference type="GeneID" id="3512596"/>
<dbReference type="KEGG" id="afm:AFUA_3G06470"/>
<dbReference type="VEuPathDB" id="FungiDB:Afu3g06470"/>
<dbReference type="eggNOG" id="KOG1311">
    <property type="taxonomic scope" value="Eukaryota"/>
</dbReference>
<dbReference type="HOGENOM" id="CLU_021757_0_0_1"/>
<dbReference type="InParanoid" id="Q4WWN2"/>
<dbReference type="OMA" id="VPVKYCK"/>
<dbReference type="OrthoDB" id="9909019at2759"/>
<dbReference type="Proteomes" id="UP000002530">
    <property type="component" value="Chromosome 3"/>
</dbReference>
<dbReference type="GO" id="GO:0005783">
    <property type="term" value="C:endoplasmic reticulum"/>
    <property type="evidence" value="ECO:0000318"/>
    <property type="project" value="GO_Central"/>
</dbReference>
<dbReference type="GO" id="GO:0005789">
    <property type="term" value="C:endoplasmic reticulum membrane"/>
    <property type="evidence" value="ECO:0007669"/>
    <property type="project" value="UniProtKB-SubCell"/>
</dbReference>
<dbReference type="GO" id="GO:0005794">
    <property type="term" value="C:Golgi apparatus"/>
    <property type="evidence" value="ECO:0000318"/>
    <property type="project" value="GO_Central"/>
</dbReference>
<dbReference type="GO" id="GO:0019706">
    <property type="term" value="F:protein-cysteine S-palmitoyltransferase activity"/>
    <property type="evidence" value="ECO:0000318"/>
    <property type="project" value="GO_Central"/>
</dbReference>
<dbReference type="GO" id="GO:0006612">
    <property type="term" value="P:protein targeting to membrane"/>
    <property type="evidence" value="ECO:0000318"/>
    <property type="project" value="GO_Central"/>
</dbReference>
<dbReference type="InterPro" id="IPR001594">
    <property type="entry name" value="Palmitoyltrfase_DHHC"/>
</dbReference>
<dbReference type="InterPro" id="IPR039859">
    <property type="entry name" value="PFA4/ZDH16/20/ERF2-like"/>
</dbReference>
<dbReference type="PANTHER" id="PTHR22883:SF43">
    <property type="entry name" value="PALMITOYLTRANSFERASE APP"/>
    <property type="match status" value="1"/>
</dbReference>
<dbReference type="PANTHER" id="PTHR22883">
    <property type="entry name" value="ZINC FINGER DHHC DOMAIN CONTAINING PROTEIN"/>
    <property type="match status" value="1"/>
</dbReference>
<dbReference type="Pfam" id="PF01529">
    <property type="entry name" value="DHHC"/>
    <property type="match status" value="1"/>
</dbReference>
<dbReference type="PROSITE" id="PS50216">
    <property type="entry name" value="DHHC"/>
    <property type="match status" value="1"/>
</dbReference>
<reference key="1">
    <citation type="journal article" date="2005" name="Nature">
        <title>Genomic sequence of the pathogenic and allergenic filamentous fungus Aspergillus fumigatus.</title>
        <authorList>
            <person name="Nierman W.C."/>
            <person name="Pain A."/>
            <person name="Anderson M.J."/>
            <person name="Wortman J.R."/>
            <person name="Kim H.S."/>
            <person name="Arroyo J."/>
            <person name="Berriman M."/>
            <person name="Abe K."/>
            <person name="Archer D.B."/>
            <person name="Bermejo C."/>
            <person name="Bennett J.W."/>
            <person name="Bowyer P."/>
            <person name="Chen D."/>
            <person name="Collins M."/>
            <person name="Coulsen R."/>
            <person name="Davies R."/>
            <person name="Dyer P.S."/>
            <person name="Farman M.L."/>
            <person name="Fedorova N."/>
            <person name="Fedorova N.D."/>
            <person name="Feldblyum T.V."/>
            <person name="Fischer R."/>
            <person name="Fosker N."/>
            <person name="Fraser A."/>
            <person name="Garcia J.L."/>
            <person name="Garcia M.J."/>
            <person name="Goble A."/>
            <person name="Goldman G.H."/>
            <person name="Gomi K."/>
            <person name="Griffith-Jones S."/>
            <person name="Gwilliam R."/>
            <person name="Haas B.J."/>
            <person name="Haas H."/>
            <person name="Harris D.E."/>
            <person name="Horiuchi H."/>
            <person name="Huang J."/>
            <person name="Humphray S."/>
            <person name="Jimenez J."/>
            <person name="Keller N."/>
            <person name="Khouri H."/>
            <person name="Kitamoto K."/>
            <person name="Kobayashi T."/>
            <person name="Konzack S."/>
            <person name="Kulkarni R."/>
            <person name="Kumagai T."/>
            <person name="Lafton A."/>
            <person name="Latge J.-P."/>
            <person name="Li W."/>
            <person name="Lord A."/>
            <person name="Lu C."/>
            <person name="Majoros W.H."/>
            <person name="May G.S."/>
            <person name="Miller B.L."/>
            <person name="Mohamoud Y."/>
            <person name="Molina M."/>
            <person name="Monod M."/>
            <person name="Mouyna I."/>
            <person name="Mulligan S."/>
            <person name="Murphy L.D."/>
            <person name="O'Neil S."/>
            <person name="Paulsen I."/>
            <person name="Penalva M.A."/>
            <person name="Pertea M."/>
            <person name="Price C."/>
            <person name="Pritchard B.L."/>
            <person name="Quail M.A."/>
            <person name="Rabbinowitsch E."/>
            <person name="Rawlins N."/>
            <person name="Rajandream M.A."/>
            <person name="Reichard U."/>
            <person name="Renauld H."/>
            <person name="Robson G.D."/>
            <person name="Rodriguez de Cordoba S."/>
            <person name="Rodriguez-Pena J.M."/>
            <person name="Ronning C.M."/>
            <person name="Rutter S."/>
            <person name="Salzberg S.L."/>
            <person name="Sanchez M."/>
            <person name="Sanchez-Ferrero J.C."/>
            <person name="Saunders D."/>
            <person name="Seeger K."/>
            <person name="Squares R."/>
            <person name="Squares S."/>
            <person name="Takeuchi M."/>
            <person name="Tekaia F."/>
            <person name="Turner G."/>
            <person name="Vazquez de Aldana C.R."/>
            <person name="Weidman J."/>
            <person name="White O."/>
            <person name="Woodward J.R."/>
            <person name="Yu J.-H."/>
            <person name="Fraser C.M."/>
            <person name="Galagan J.E."/>
            <person name="Asai K."/>
            <person name="Machida M."/>
            <person name="Hall N."/>
            <person name="Barrell B.G."/>
            <person name="Denning D.W."/>
        </authorList>
    </citation>
    <scope>NUCLEOTIDE SEQUENCE [LARGE SCALE GENOMIC DNA]</scope>
    <source>
        <strain>ATCC MYA-4609 / CBS 101355 / FGSC A1100 / Af293</strain>
    </source>
</reference>
<protein>
    <recommendedName>
        <fullName>Palmitoyltransferase erf2</fullName>
        <ecNumber evidence="2">2.3.1.225</ecNumber>
    </recommendedName>
    <alternativeName>
        <fullName>DHHC cysteine-rich domain-containing protein erf2</fullName>
    </alternativeName>
    <alternativeName>
        <fullName>Ras protein acyltransferase</fullName>
    </alternativeName>
</protein>
<feature type="chain" id="PRO_0000212938" description="Palmitoyltransferase erf2">
    <location>
        <begin position="1"/>
        <end position="607"/>
    </location>
</feature>
<feature type="topological domain" description="Cytoplasmic" evidence="4">
    <location>
        <begin position="1"/>
        <end position="305"/>
    </location>
</feature>
<feature type="transmembrane region" description="Helical" evidence="4">
    <location>
        <begin position="306"/>
        <end position="326"/>
    </location>
</feature>
<feature type="topological domain" description="Lumenal" evidence="4">
    <location>
        <begin position="327"/>
        <end position="330"/>
    </location>
</feature>
<feature type="transmembrane region" description="Helical" evidence="4">
    <location>
        <begin position="331"/>
        <end position="351"/>
    </location>
</feature>
<feature type="topological domain" description="Cytoplasmic" evidence="4">
    <location>
        <begin position="352"/>
        <end position="449"/>
    </location>
</feature>
<feature type="transmembrane region" description="Helical" evidence="4">
    <location>
        <begin position="450"/>
        <end position="470"/>
    </location>
</feature>
<feature type="topological domain" description="Lumenal" evidence="4">
    <location>
        <begin position="471"/>
        <end position="497"/>
    </location>
</feature>
<feature type="transmembrane region" description="Helical" evidence="4">
    <location>
        <begin position="498"/>
        <end position="518"/>
    </location>
</feature>
<feature type="topological domain" description="Cytoplasmic" evidence="4">
    <location>
        <begin position="519"/>
        <end position="607"/>
    </location>
</feature>
<feature type="domain" description="DHHC" evidence="5">
    <location>
        <begin position="405"/>
        <end position="455"/>
    </location>
</feature>
<feature type="region of interest" description="Disordered" evidence="6">
    <location>
        <begin position="1"/>
        <end position="198"/>
    </location>
</feature>
<feature type="region of interest" description="Disordered" evidence="6">
    <location>
        <begin position="217"/>
        <end position="272"/>
    </location>
</feature>
<feature type="region of interest" description="Disordered" evidence="6">
    <location>
        <begin position="570"/>
        <end position="607"/>
    </location>
</feature>
<feature type="compositionally biased region" description="Low complexity" evidence="6">
    <location>
        <begin position="53"/>
        <end position="66"/>
    </location>
</feature>
<feature type="compositionally biased region" description="Polar residues" evidence="6">
    <location>
        <begin position="73"/>
        <end position="102"/>
    </location>
</feature>
<feature type="compositionally biased region" description="Polar residues" evidence="6">
    <location>
        <begin position="125"/>
        <end position="156"/>
    </location>
</feature>
<feature type="compositionally biased region" description="Polar residues" evidence="6">
    <location>
        <begin position="176"/>
        <end position="192"/>
    </location>
</feature>
<feature type="compositionally biased region" description="Polar residues" evidence="6">
    <location>
        <begin position="227"/>
        <end position="242"/>
    </location>
</feature>
<feature type="compositionally biased region" description="Basic and acidic residues" evidence="6">
    <location>
        <begin position="245"/>
        <end position="256"/>
    </location>
</feature>
<feature type="compositionally biased region" description="Polar residues" evidence="6">
    <location>
        <begin position="257"/>
        <end position="272"/>
    </location>
</feature>
<feature type="active site" description="S-palmitoyl cysteine intermediate" evidence="2">
    <location>
        <position position="435"/>
    </location>
</feature>
<proteinExistence type="inferred from homology"/>
<organism>
    <name type="scientific">Aspergillus fumigatus (strain ATCC MYA-4609 / CBS 101355 / FGSC A1100 / Af293)</name>
    <name type="common">Neosartorya fumigata</name>
    <dbReference type="NCBI Taxonomy" id="330879"/>
    <lineage>
        <taxon>Eukaryota</taxon>
        <taxon>Fungi</taxon>
        <taxon>Dikarya</taxon>
        <taxon>Ascomycota</taxon>
        <taxon>Pezizomycotina</taxon>
        <taxon>Eurotiomycetes</taxon>
        <taxon>Eurotiomycetidae</taxon>
        <taxon>Eurotiales</taxon>
        <taxon>Aspergillaceae</taxon>
        <taxon>Aspergillus</taxon>
        <taxon>Aspergillus subgen. Fumigati</taxon>
    </lineage>
</organism>